<name>PHLB1_RAT</name>
<gene>
    <name type="primary">Phldb1</name>
    <name type="synonym">Ll5</name>
</gene>
<dbReference type="EMBL" id="X74226">
    <property type="protein sequence ID" value="CAA52297.1"/>
    <property type="status" value="ALT_SEQ"/>
    <property type="molecule type" value="mRNA"/>
</dbReference>
<dbReference type="PIR" id="S37032">
    <property type="entry name" value="S37032"/>
</dbReference>
<dbReference type="SMR" id="Q63312"/>
<dbReference type="FunCoup" id="Q63312">
    <property type="interactions" value="647"/>
</dbReference>
<dbReference type="IntAct" id="Q63312">
    <property type="interactions" value="1"/>
</dbReference>
<dbReference type="STRING" id="10116.ENSRNOP00000069330"/>
<dbReference type="CarbonylDB" id="Q63312"/>
<dbReference type="iPTMnet" id="Q63312"/>
<dbReference type="PaxDb" id="10116-ENSRNOP00000046235"/>
<dbReference type="UCSC" id="RGD:620878">
    <property type="organism name" value="rat"/>
</dbReference>
<dbReference type="AGR" id="RGD:620878"/>
<dbReference type="RGD" id="620878">
    <property type="gene designation" value="Phldb1"/>
</dbReference>
<dbReference type="eggNOG" id="ENOG502QPZY">
    <property type="taxonomic scope" value="Eukaryota"/>
</dbReference>
<dbReference type="InParanoid" id="Q63312"/>
<dbReference type="PhylomeDB" id="Q63312"/>
<dbReference type="Proteomes" id="UP000002494">
    <property type="component" value="Unplaced"/>
</dbReference>
<dbReference type="GO" id="GO:0045180">
    <property type="term" value="C:basal cortex"/>
    <property type="evidence" value="ECO:0000266"/>
    <property type="project" value="RGD"/>
</dbReference>
<dbReference type="GO" id="GO:1904261">
    <property type="term" value="P:positive regulation of basement membrane assembly involved in embryonic body morphogenesis"/>
    <property type="evidence" value="ECO:0000266"/>
    <property type="project" value="RGD"/>
</dbReference>
<dbReference type="GO" id="GO:0010717">
    <property type="term" value="P:regulation of epithelial to mesenchymal transition"/>
    <property type="evidence" value="ECO:0000266"/>
    <property type="project" value="RGD"/>
</dbReference>
<dbReference type="GO" id="GO:0010470">
    <property type="term" value="P:regulation of gastrulation"/>
    <property type="evidence" value="ECO:0000266"/>
    <property type="project" value="RGD"/>
</dbReference>
<dbReference type="GO" id="GO:0070507">
    <property type="term" value="P:regulation of microtubule cytoskeleton organization"/>
    <property type="evidence" value="ECO:0000266"/>
    <property type="project" value="RGD"/>
</dbReference>
<dbReference type="CDD" id="cd14673">
    <property type="entry name" value="PH_PHLDB1_2"/>
    <property type="match status" value="1"/>
</dbReference>
<dbReference type="FunFam" id="2.30.29.30:FF:000006">
    <property type="entry name" value="Pleckstrin homology like domain family B member 1"/>
    <property type="match status" value="1"/>
</dbReference>
<dbReference type="Gene3D" id="2.30.29.30">
    <property type="entry name" value="Pleckstrin-homology domain (PH domain)/Phosphotyrosine-binding domain (PTB)"/>
    <property type="match status" value="1"/>
</dbReference>
<dbReference type="InterPro" id="IPR011993">
    <property type="entry name" value="PH-like_dom_sf"/>
</dbReference>
<dbReference type="InterPro" id="IPR052212">
    <property type="entry name" value="PH-like_domain"/>
</dbReference>
<dbReference type="InterPro" id="IPR001849">
    <property type="entry name" value="PH_domain"/>
</dbReference>
<dbReference type="InterPro" id="IPR037810">
    <property type="entry name" value="PHLDB1/2/3_PH"/>
</dbReference>
<dbReference type="PANTHER" id="PTHR12156:SF23">
    <property type="entry name" value="PLECKSTRIN HOMOLOGY-LIKE DOMAIN FAMILY B MEMBER 1"/>
    <property type="match status" value="1"/>
</dbReference>
<dbReference type="PANTHER" id="PTHR12156">
    <property type="entry name" value="PLECKSTRIN HOMOLOGY-LIKE DOMAIN, FAMILY B, MEMBER 3"/>
    <property type="match status" value="1"/>
</dbReference>
<dbReference type="Pfam" id="PF00169">
    <property type="entry name" value="PH"/>
    <property type="match status" value="1"/>
</dbReference>
<dbReference type="SMART" id="SM00233">
    <property type="entry name" value="PH"/>
    <property type="match status" value="1"/>
</dbReference>
<dbReference type="SUPFAM" id="SSF50729">
    <property type="entry name" value="PH domain-like"/>
    <property type="match status" value="1"/>
</dbReference>
<dbReference type="PROSITE" id="PS50003">
    <property type="entry name" value="PH_DOMAIN"/>
    <property type="match status" value="1"/>
</dbReference>
<proteinExistence type="evidence at protein level"/>
<evidence type="ECO:0000250" key="1"/>
<evidence type="ECO:0000250" key="2">
    <source>
        <dbReference type="UniProtKB" id="Q6PDH0"/>
    </source>
</evidence>
<evidence type="ECO:0000250" key="3">
    <source>
        <dbReference type="UniProtKB" id="Q86UU1"/>
    </source>
</evidence>
<evidence type="ECO:0000255" key="4"/>
<evidence type="ECO:0000255" key="5">
    <source>
        <dbReference type="PROSITE-ProRule" id="PRU00145"/>
    </source>
</evidence>
<evidence type="ECO:0000256" key="6">
    <source>
        <dbReference type="SAM" id="MobiDB-lite"/>
    </source>
</evidence>
<evidence type="ECO:0000305" key="7"/>
<evidence type="ECO:0007744" key="8">
    <source>
    </source>
</evidence>
<comment type="domain">
    <text evidence="1">The PH domain mediates the binding to phosphoinositides.</text>
</comment>
<comment type="sequence caution" evidence="7">
    <conflict type="frameshift">
        <sequence resource="EMBL-CDS" id="CAA52297"/>
    </conflict>
</comment>
<sequence length="831" mass="93541">LTLGARGRRTRSPSPTLGESLAPRKGSFSGRLSPAYSLGSLTGASPRQSPHAQRKLSSGDLRVPIPRERKNSITEISDNEDDLLEYHRRQRQERLREQEMERLERQRLETILNLCAEYSRADGGPETGELPSIGEATAALALAGRRPSRGLAGAIVVSGRSGEESGGASQRLWESMERSDEENLKEECSSTESTQQEHEDAPSTKLQGEVLAVEEERAQVLGRVEQLKVRVKELEQQLQEAAREAEMERALLQGEREAERALLQKEQRAMDQLQEKLVALETGIQKERDKEADALETETKLFEDLEFQQLERESRVEEERELAGQGLLRSKAELLRSVSKRKERLAVLDSQAGQIRAQAVQESERLAREKNAVLQLLQKEKEKLTVLERRYHSLTGGRPFPKTTSTLKEVYRSKMNGDMASPLPRTRSGPLPSSSGSSSSSSQLSVATLGRSPSPKSALLAQNGTSSLPRNLAATLQDIETKRQLALQQKVELPPAEPLSPEDPAGHQVIEEQRRRLAELKQKAAAEAQCQWDALHGAAAFPAGPSGFPTLMHHSILHHLPAGRERGEEGEHAYDTLSLESSDSMETSISTGGNSACSPDNMSSASGLDMGKIEEMEKMLKEAHAEKSRLMESREREMELRRQALEEERRRREQVERRLQSESARRQQLVEKEVKLREKQFSQARPLTRYLPNRKEDFDLKTHIESSGHGVDTCLHVVLSSKVCRGYLIKMGGKIKSWKKRWFVFDRLKRTLSYYVDKHETKLKGVIYFQAIEEVYYDHLRSAAKSPNPALTFCVKTHDRLYYMVAPSAEAMRIWMDVIVTGAEGYTQFMN</sequence>
<keyword id="KW-0175">Coiled coil</keyword>
<keyword id="KW-0488">Methylation</keyword>
<keyword id="KW-0597">Phosphoprotein</keyword>
<keyword id="KW-1185">Reference proteome</keyword>
<organism>
    <name type="scientific">Rattus norvegicus</name>
    <name type="common">Rat</name>
    <dbReference type="NCBI Taxonomy" id="10116"/>
    <lineage>
        <taxon>Eukaryota</taxon>
        <taxon>Metazoa</taxon>
        <taxon>Chordata</taxon>
        <taxon>Craniata</taxon>
        <taxon>Vertebrata</taxon>
        <taxon>Euteleostomi</taxon>
        <taxon>Mammalia</taxon>
        <taxon>Eutheria</taxon>
        <taxon>Euarchontoglires</taxon>
        <taxon>Glires</taxon>
        <taxon>Rodentia</taxon>
        <taxon>Myomorpha</taxon>
        <taxon>Muroidea</taxon>
        <taxon>Muridae</taxon>
        <taxon>Murinae</taxon>
        <taxon>Rattus</taxon>
    </lineage>
</organism>
<protein>
    <recommendedName>
        <fullName>Pleckstrin homology-like domain family B member 1</fullName>
    </recommendedName>
    <alternativeName>
        <fullName>Protein LL5-alpha</fullName>
    </alternativeName>
</protein>
<reference key="1">
    <citation type="journal article" date="1993" name="Biochim. Biophys. Acta">
        <title>Cloning of LL5, a novel protein-encoding cDNA from a rat pituitary library.</title>
        <authorList>
            <person name="Levi L."/>
            <person name="Hanukoglu I."/>
            <person name="Raikhinstein M."/>
            <person name="Kohen F."/>
            <person name="Koch Y."/>
        </authorList>
    </citation>
    <scope>NUCLEOTIDE SEQUENCE [MRNA]</scope>
    <source>
        <strain>Wistar</strain>
        <tissue>Pituitary</tissue>
    </source>
</reference>
<reference key="2">
    <citation type="journal article" date="2012" name="Nat. Commun.">
        <title>Quantitative maps of protein phosphorylation sites across 14 different rat organs and tissues.</title>
        <authorList>
            <person name="Lundby A."/>
            <person name="Secher A."/>
            <person name="Lage K."/>
            <person name="Nordsborg N.B."/>
            <person name="Dmytriyev A."/>
            <person name="Lundby C."/>
            <person name="Olsen J.V."/>
        </authorList>
    </citation>
    <scope>PHOSPHORYLATION [LARGE SCALE ANALYSIS] AT SER-12; SER-14; SER-27; SER-33; SER-45; SER-72 AND SER-77</scope>
    <scope>IDENTIFICATION BY MASS SPECTROMETRY [LARGE SCALE ANALYSIS]</scope>
</reference>
<accession>Q63312</accession>
<feature type="chain" id="PRO_0000053893" description="Pleckstrin homology-like domain family B member 1">
    <location>
        <begin position="1" status="less than"/>
        <end position="831"/>
    </location>
</feature>
<feature type="domain" description="PH" evidence="5">
    <location>
        <begin position="721"/>
        <end position="824"/>
    </location>
</feature>
<feature type="region of interest" description="Disordered" evidence="6">
    <location>
        <begin position="1"/>
        <end position="73"/>
    </location>
</feature>
<feature type="region of interest" description="Disordered" evidence="6">
    <location>
        <begin position="160"/>
        <end position="209"/>
    </location>
</feature>
<feature type="region of interest" description="Disordered" evidence="6">
    <location>
        <begin position="416"/>
        <end position="465"/>
    </location>
</feature>
<feature type="region of interest" description="Disordered" evidence="6">
    <location>
        <begin position="584"/>
        <end position="603"/>
    </location>
</feature>
<feature type="coiled-coil region" evidence="4">
    <location>
        <begin position="180"/>
        <end position="306"/>
    </location>
</feature>
<feature type="coiled-coil region" evidence="4">
    <location>
        <begin position="610"/>
        <end position="676"/>
    </location>
</feature>
<feature type="compositionally biased region" description="Basic residues" evidence="6">
    <location>
        <begin position="1"/>
        <end position="11"/>
    </location>
</feature>
<feature type="compositionally biased region" description="Polar residues" evidence="6">
    <location>
        <begin position="39"/>
        <end position="51"/>
    </location>
</feature>
<feature type="compositionally biased region" description="Basic and acidic residues" evidence="6">
    <location>
        <begin position="174"/>
        <end position="188"/>
    </location>
</feature>
<feature type="compositionally biased region" description="Low complexity" evidence="6">
    <location>
        <begin position="421"/>
        <end position="442"/>
    </location>
</feature>
<feature type="modified residue" description="Omega-N-methylarginine" evidence="2">
    <location>
        <position position="6"/>
    </location>
</feature>
<feature type="modified residue" description="Phosphoserine" evidence="8">
    <location>
        <position position="12"/>
    </location>
</feature>
<feature type="modified residue" description="Phosphoserine" evidence="8">
    <location>
        <position position="14"/>
    </location>
</feature>
<feature type="modified residue" description="Phosphothreonine" evidence="3">
    <location>
        <position position="16"/>
    </location>
</feature>
<feature type="modified residue" description="Phosphoserine" evidence="8">
    <location>
        <position position="27"/>
    </location>
</feature>
<feature type="modified residue" description="Phosphoserine" evidence="8">
    <location>
        <position position="33"/>
    </location>
</feature>
<feature type="modified residue" description="Phosphoserine" evidence="8">
    <location>
        <position position="45"/>
    </location>
</feature>
<feature type="modified residue" description="Phosphoserine" evidence="3">
    <location>
        <position position="49"/>
    </location>
</feature>
<feature type="modified residue" description="Phosphoserine" evidence="3">
    <location>
        <position position="57"/>
    </location>
</feature>
<feature type="modified residue" description="Phosphoserine" evidence="8">
    <location>
        <position position="72"/>
    </location>
</feature>
<feature type="modified residue" description="Phosphoserine" evidence="8">
    <location>
        <position position="77"/>
    </location>
</feature>
<feature type="modified residue" description="Phosphoserine" evidence="3">
    <location>
        <position position="175"/>
    </location>
</feature>
<feature type="modified residue" description="Phosphoserine" evidence="3">
    <location>
        <position position="421"/>
    </location>
</feature>
<feature type="modified residue" description="Phosphoserine" evidence="2">
    <location>
        <position position="467"/>
    </location>
</feature>
<feature type="non-terminal residue">
    <location>
        <position position="1"/>
    </location>
</feature>